<dbReference type="EC" id="4.2.1.9" evidence="1"/>
<dbReference type="EMBL" id="AP009324">
    <property type="protein sequence ID" value="BAF78921.1"/>
    <property type="molecule type" value="Genomic_DNA"/>
</dbReference>
<dbReference type="RefSeq" id="WP_001255780.1">
    <property type="nucleotide sequence ID" value="NC_009782.1"/>
</dbReference>
<dbReference type="SMR" id="A7X4M5"/>
<dbReference type="KEGG" id="saw:SAHV_2038"/>
<dbReference type="HOGENOM" id="CLU_014271_4_2_9"/>
<dbReference type="UniPathway" id="UPA00047">
    <property type="reaction ID" value="UER00057"/>
</dbReference>
<dbReference type="UniPathway" id="UPA00049">
    <property type="reaction ID" value="UER00061"/>
</dbReference>
<dbReference type="GO" id="GO:0005829">
    <property type="term" value="C:cytosol"/>
    <property type="evidence" value="ECO:0007669"/>
    <property type="project" value="TreeGrafter"/>
</dbReference>
<dbReference type="GO" id="GO:0051537">
    <property type="term" value="F:2 iron, 2 sulfur cluster binding"/>
    <property type="evidence" value="ECO:0007669"/>
    <property type="project" value="UniProtKB-UniRule"/>
</dbReference>
<dbReference type="GO" id="GO:0004160">
    <property type="term" value="F:dihydroxy-acid dehydratase activity"/>
    <property type="evidence" value="ECO:0007669"/>
    <property type="project" value="UniProtKB-UniRule"/>
</dbReference>
<dbReference type="GO" id="GO:0000287">
    <property type="term" value="F:magnesium ion binding"/>
    <property type="evidence" value="ECO:0007669"/>
    <property type="project" value="UniProtKB-UniRule"/>
</dbReference>
<dbReference type="GO" id="GO:0009097">
    <property type="term" value="P:isoleucine biosynthetic process"/>
    <property type="evidence" value="ECO:0007669"/>
    <property type="project" value="UniProtKB-UniRule"/>
</dbReference>
<dbReference type="GO" id="GO:0009099">
    <property type="term" value="P:L-valine biosynthetic process"/>
    <property type="evidence" value="ECO:0007669"/>
    <property type="project" value="UniProtKB-UniRule"/>
</dbReference>
<dbReference type="FunFam" id="3.50.30.80:FF:000001">
    <property type="entry name" value="Dihydroxy-acid dehydratase"/>
    <property type="match status" value="1"/>
</dbReference>
<dbReference type="Gene3D" id="3.50.30.80">
    <property type="entry name" value="IlvD/EDD C-terminal domain-like"/>
    <property type="match status" value="1"/>
</dbReference>
<dbReference type="HAMAP" id="MF_00012">
    <property type="entry name" value="IlvD"/>
    <property type="match status" value="1"/>
</dbReference>
<dbReference type="InterPro" id="IPR042096">
    <property type="entry name" value="Dihydro-acid_dehy_C"/>
</dbReference>
<dbReference type="InterPro" id="IPR004404">
    <property type="entry name" value="DihydroxyA_deHydtase"/>
</dbReference>
<dbReference type="InterPro" id="IPR020558">
    <property type="entry name" value="DiOHA_6PGluconate_deHydtase_CS"/>
</dbReference>
<dbReference type="InterPro" id="IPR056740">
    <property type="entry name" value="ILV_EDD_C"/>
</dbReference>
<dbReference type="InterPro" id="IPR000581">
    <property type="entry name" value="ILV_EDD_N"/>
</dbReference>
<dbReference type="InterPro" id="IPR037237">
    <property type="entry name" value="IlvD/EDD_N"/>
</dbReference>
<dbReference type="NCBIfam" id="TIGR00110">
    <property type="entry name" value="ilvD"/>
    <property type="match status" value="1"/>
</dbReference>
<dbReference type="NCBIfam" id="NF002068">
    <property type="entry name" value="PRK00911.1"/>
    <property type="match status" value="1"/>
</dbReference>
<dbReference type="PANTHER" id="PTHR43661">
    <property type="entry name" value="D-XYLONATE DEHYDRATASE"/>
    <property type="match status" value="1"/>
</dbReference>
<dbReference type="PANTHER" id="PTHR43661:SF3">
    <property type="entry name" value="D-XYLONATE DEHYDRATASE YAGF-RELATED"/>
    <property type="match status" value="1"/>
</dbReference>
<dbReference type="Pfam" id="PF24877">
    <property type="entry name" value="ILV_EDD_C"/>
    <property type="match status" value="1"/>
</dbReference>
<dbReference type="Pfam" id="PF00920">
    <property type="entry name" value="ILVD_EDD_N"/>
    <property type="match status" value="1"/>
</dbReference>
<dbReference type="SUPFAM" id="SSF143975">
    <property type="entry name" value="IlvD/EDD N-terminal domain-like"/>
    <property type="match status" value="1"/>
</dbReference>
<dbReference type="SUPFAM" id="SSF52016">
    <property type="entry name" value="LeuD/IlvD-like"/>
    <property type="match status" value="1"/>
</dbReference>
<dbReference type="PROSITE" id="PS00886">
    <property type="entry name" value="ILVD_EDD_1"/>
    <property type="match status" value="1"/>
</dbReference>
<dbReference type="PROSITE" id="PS00887">
    <property type="entry name" value="ILVD_EDD_2"/>
    <property type="match status" value="1"/>
</dbReference>
<accession>A7X4M5</accession>
<feature type="chain" id="PRO_1000001065" description="Dihydroxy-acid dehydratase">
    <location>
        <begin position="1"/>
        <end position="562"/>
    </location>
</feature>
<feature type="active site" description="Proton acceptor" evidence="1">
    <location>
        <position position="472"/>
    </location>
</feature>
<feature type="binding site" evidence="1">
    <location>
        <position position="80"/>
    </location>
    <ligand>
        <name>Mg(2+)</name>
        <dbReference type="ChEBI" id="CHEBI:18420"/>
    </ligand>
</feature>
<feature type="binding site" evidence="1">
    <location>
        <position position="121"/>
    </location>
    <ligand>
        <name>[2Fe-2S] cluster</name>
        <dbReference type="ChEBI" id="CHEBI:190135"/>
    </ligand>
</feature>
<feature type="binding site" evidence="1">
    <location>
        <position position="122"/>
    </location>
    <ligand>
        <name>Mg(2+)</name>
        <dbReference type="ChEBI" id="CHEBI:18420"/>
    </ligand>
</feature>
<feature type="binding site" description="via carbamate group" evidence="1">
    <location>
        <position position="123"/>
    </location>
    <ligand>
        <name>Mg(2+)</name>
        <dbReference type="ChEBI" id="CHEBI:18420"/>
    </ligand>
</feature>
<feature type="binding site" evidence="1">
    <location>
        <position position="194"/>
    </location>
    <ligand>
        <name>[2Fe-2S] cluster</name>
        <dbReference type="ChEBI" id="CHEBI:190135"/>
    </ligand>
</feature>
<feature type="binding site" evidence="1">
    <location>
        <position position="446"/>
    </location>
    <ligand>
        <name>Mg(2+)</name>
        <dbReference type="ChEBI" id="CHEBI:18420"/>
    </ligand>
</feature>
<feature type="modified residue" description="N6-carboxylysine" evidence="1">
    <location>
        <position position="123"/>
    </location>
</feature>
<keyword id="KW-0001">2Fe-2S</keyword>
<keyword id="KW-0028">Amino-acid biosynthesis</keyword>
<keyword id="KW-0100">Branched-chain amino acid biosynthesis</keyword>
<keyword id="KW-0408">Iron</keyword>
<keyword id="KW-0411">Iron-sulfur</keyword>
<keyword id="KW-0456">Lyase</keyword>
<keyword id="KW-0460">Magnesium</keyword>
<keyword id="KW-0479">Metal-binding</keyword>
<sequence>MRSDMIKKGDHQAPARSLLHATGALKSPTDMNKPFVAICNSYIDIVPGHVHLRELADIAKEAIREAGAIPFEFNTIGVDDGIAMGHIGMRYSLPSREIIADAAETVINAHWFDGVFYIPNCDKITPGMILAAMRTNVPAIFCSGGPMKAGLSAHGKALTLSSMFEAVGAFKEGSISKEEFLDMEQNACPTCGSCAGMFTANSMNCLMEVLGLALPYNGTALAVSDQRREMIRQAAFKLVENIKNDLKPRDIVTREAIDDAFALDMAMGGSTNTVLHTLAIANEAGIDYDLERINAIAKRTPYLSKIAPSSSYSMHDVHEAGGVPAIINELMKKDGTLHPDRITVTGKTLRENNEGKEIKNFDVIHPLDAPYDAQGGLSILFGNIAPKGAVIKVGGVDPSIKTFTGKAICFNSHDEAVEAIDNRTVRAGHVVVIRYEGPKGGPGMPEMLAPTSSIVGRGLGKDVALITDGRFSGATRGIAVGHISPEAASGGPIALIEDGDEITIDLTNRTLNVNQPEDVLARRRESLTPFKAKVKTGYLARYTALVTSANTGGVMQVPENLI</sequence>
<comment type="function">
    <text evidence="1">Functions in the biosynthesis of branched-chain amino acids. Catalyzes the dehydration of (2R,3R)-2,3-dihydroxy-3-methylpentanoate (2,3-dihydroxy-3-methylvalerate) into 2-oxo-3-methylpentanoate (2-oxo-3-methylvalerate) and of (2R)-2,3-dihydroxy-3-methylbutanoate (2,3-dihydroxyisovalerate) into 2-oxo-3-methylbutanoate (2-oxoisovalerate), the penultimate precursor to L-isoleucine and L-valine, respectively.</text>
</comment>
<comment type="catalytic activity">
    <reaction evidence="1">
        <text>(2R)-2,3-dihydroxy-3-methylbutanoate = 3-methyl-2-oxobutanoate + H2O</text>
        <dbReference type="Rhea" id="RHEA:24809"/>
        <dbReference type="ChEBI" id="CHEBI:11851"/>
        <dbReference type="ChEBI" id="CHEBI:15377"/>
        <dbReference type="ChEBI" id="CHEBI:49072"/>
        <dbReference type="EC" id="4.2.1.9"/>
    </reaction>
    <physiologicalReaction direction="left-to-right" evidence="1">
        <dbReference type="Rhea" id="RHEA:24810"/>
    </physiologicalReaction>
</comment>
<comment type="catalytic activity">
    <reaction evidence="1">
        <text>(2R,3R)-2,3-dihydroxy-3-methylpentanoate = (S)-3-methyl-2-oxopentanoate + H2O</text>
        <dbReference type="Rhea" id="RHEA:27694"/>
        <dbReference type="ChEBI" id="CHEBI:15377"/>
        <dbReference type="ChEBI" id="CHEBI:35146"/>
        <dbReference type="ChEBI" id="CHEBI:49258"/>
        <dbReference type="EC" id="4.2.1.9"/>
    </reaction>
    <physiologicalReaction direction="left-to-right" evidence="1">
        <dbReference type="Rhea" id="RHEA:27695"/>
    </physiologicalReaction>
</comment>
<comment type="cofactor">
    <cofactor evidence="1">
        <name>[2Fe-2S] cluster</name>
        <dbReference type="ChEBI" id="CHEBI:190135"/>
    </cofactor>
    <text evidence="1">Binds 1 [2Fe-2S] cluster per subunit. This cluster acts as a Lewis acid cofactor.</text>
</comment>
<comment type="cofactor">
    <cofactor evidence="1">
        <name>Mg(2+)</name>
        <dbReference type="ChEBI" id="CHEBI:18420"/>
    </cofactor>
</comment>
<comment type="pathway">
    <text evidence="1">Amino-acid biosynthesis; L-isoleucine biosynthesis; L-isoleucine from 2-oxobutanoate: step 3/4.</text>
</comment>
<comment type="pathway">
    <text evidence="1">Amino-acid biosynthesis; L-valine biosynthesis; L-valine from pyruvate: step 3/4.</text>
</comment>
<comment type="subunit">
    <text evidence="1">Homodimer.</text>
</comment>
<comment type="similarity">
    <text evidence="1">Belongs to the IlvD/Edd family.</text>
</comment>
<protein>
    <recommendedName>
        <fullName evidence="1">Dihydroxy-acid dehydratase</fullName>
        <shortName evidence="1">DAD</shortName>
        <ecNumber evidence="1">4.2.1.9</ecNumber>
    </recommendedName>
</protein>
<name>ILVD_STAA1</name>
<organism>
    <name type="scientific">Staphylococcus aureus (strain Mu3 / ATCC 700698)</name>
    <dbReference type="NCBI Taxonomy" id="418127"/>
    <lineage>
        <taxon>Bacteria</taxon>
        <taxon>Bacillati</taxon>
        <taxon>Bacillota</taxon>
        <taxon>Bacilli</taxon>
        <taxon>Bacillales</taxon>
        <taxon>Staphylococcaceae</taxon>
        <taxon>Staphylococcus</taxon>
    </lineage>
</organism>
<reference key="1">
    <citation type="journal article" date="2008" name="Antimicrob. Agents Chemother.">
        <title>Mutated response regulator graR is responsible for phenotypic conversion of Staphylococcus aureus from heterogeneous vancomycin-intermediate resistance to vancomycin-intermediate resistance.</title>
        <authorList>
            <person name="Neoh H.-M."/>
            <person name="Cui L."/>
            <person name="Yuzawa H."/>
            <person name="Takeuchi F."/>
            <person name="Matsuo M."/>
            <person name="Hiramatsu K."/>
        </authorList>
    </citation>
    <scope>NUCLEOTIDE SEQUENCE [LARGE SCALE GENOMIC DNA]</scope>
    <source>
        <strain>Mu3 / ATCC 700698</strain>
    </source>
</reference>
<gene>
    <name evidence="1" type="primary">ilvD</name>
    <name type="ordered locus">SAHV_2038</name>
</gene>
<evidence type="ECO:0000255" key="1">
    <source>
        <dbReference type="HAMAP-Rule" id="MF_00012"/>
    </source>
</evidence>
<proteinExistence type="inferred from homology"/>